<dbReference type="EMBL" id="AB117752">
    <property type="protein sequence ID" value="BAD91010.1"/>
    <property type="status" value="ALT_SEQ"/>
    <property type="molecule type" value="mRNA"/>
</dbReference>
<dbReference type="EMBL" id="BC099760">
    <property type="protein sequence ID" value="AAH99760.1"/>
    <property type="status" value="ALT_INIT"/>
    <property type="molecule type" value="mRNA"/>
</dbReference>
<dbReference type="EMBL" id="AB108668">
    <property type="protein sequence ID" value="BAD23893.1"/>
    <property type="status" value="ALT_INIT"/>
    <property type="molecule type" value="mRNA"/>
</dbReference>
<dbReference type="RefSeq" id="NP_001012152.2">
    <property type="nucleotide sequence ID" value="NM_001012152.2"/>
</dbReference>
<dbReference type="RefSeq" id="NP_001029193.2">
    <property type="nucleotide sequence ID" value="NM_001034021.2"/>
</dbReference>
<dbReference type="RefSeq" id="NP_001106836.1">
    <property type="nucleotide sequence ID" value="NM_001113365.1"/>
</dbReference>
<dbReference type="SMR" id="Q5CD77"/>
<dbReference type="FunCoup" id="Q5CD77">
    <property type="interactions" value="747"/>
</dbReference>
<dbReference type="STRING" id="10116.ENSRNOP00000075351"/>
<dbReference type="PhosphoSitePlus" id="Q5CD77"/>
<dbReference type="PaxDb" id="10116-ENSRNOP00000055215"/>
<dbReference type="GeneID" id="360956"/>
<dbReference type="KEGG" id="rno:360956"/>
<dbReference type="AGR" id="RGD:1309993"/>
<dbReference type="CTD" id="57533"/>
<dbReference type="RGD" id="1309993">
    <property type="gene designation" value="Tbc1d14"/>
</dbReference>
<dbReference type="eggNOG" id="KOG2223">
    <property type="taxonomic scope" value="Eukaryota"/>
</dbReference>
<dbReference type="InParanoid" id="Q5CD77"/>
<dbReference type="OrthoDB" id="294251at2759"/>
<dbReference type="PhylomeDB" id="Q5CD77"/>
<dbReference type="Reactome" id="R-RNO-8854214">
    <property type="pathway name" value="TBC/RABGAPs"/>
</dbReference>
<dbReference type="PRO" id="PR:Q5CD77"/>
<dbReference type="Proteomes" id="UP000002494">
    <property type="component" value="Unplaced"/>
</dbReference>
<dbReference type="GO" id="GO:0005776">
    <property type="term" value="C:autophagosome"/>
    <property type="evidence" value="ECO:0000266"/>
    <property type="project" value="RGD"/>
</dbReference>
<dbReference type="GO" id="GO:0005829">
    <property type="term" value="C:cytosol"/>
    <property type="evidence" value="ECO:0007669"/>
    <property type="project" value="GOC"/>
</dbReference>
<dbReference type="GO" id="GO:0005794">
    <property type="term" value="C:Golgi apparatus"/>
    <property type="evidence" value="ECO:0007669"/>
    <property type="project" value="UniProtKB-SubCell"/>
</dbReference>
<dbReference type="GO" id="GO:0055037">
    <property type="term" value="C:recycling endosome"/>
    <property type="evidence" value="ECO:0000266"/>
    <property type="project" value="RGD"/>
</dbReference>
<dbReference type="GO" id="GO:0005096">
    <property type="term" value="F:GTPase activator activity"/>
    <property type="evidence" value="ECO:0000318"/>
    <property type="project" value="GO_Central"/>
</dbReference>
<dbReference type="GO" id="GO:0019901">
    <property type="term" value="F:protein kinase binding"/>
    <property type="evidence" value="ECO:0000266"/>
    <property type="project" value="RGD"/>
</dbReference>
<dbReference type="GO" id="GO:0010507">
    <property type="term" value="P:negative regulation of autophagy"/>
    <property type="evidence" value="ECO:0000266"/>
    <property type="project" value="RGD"/>
</dbReference>
<dbReference type="GO" id="GO:0071955">
    <property type="term" value="P:recycling endosome to Golgi transport"/>
    <property type="evidence" value="ECO:0000266"/>
    <property type="project" value="RGD"/>
</dbReference>
<dbReference type="GO" id="GO:2000785">
    <property type="term" value="P:regulation of autophagosome assembly"/>
    <property type="evidence" value="ECO:0000266"/>
    <property type="project" value="RGD"/>
</dbReference>
<dbReference type="FunFam" id="1.10.8.270:FF:000008">
    <property type="entry name" value="Putative TBC1 domain family member 14"/>
    <property type="match status" value="1"/>
</dbReference>
<dbReference type="FunFam" id="1.10.10.750:FF:000005">
    <property type="entry name" value="TBC1 domain family member 14"/>
    <property type="match status" value="1"/>
</dbReference>
<dbReference type="FunFam" id="1.10.472.80:FF:000006">
    <property type="entry name" value="TBC1 domain family member 14"/>
    <property type="match status" value="1"/>
</dbReference>
<dbReference type="Gene3D" id="1.10.8.270">
    <property type="entry name" value="putative rabgap domain of human tbc1 domain family member 14 like domains"/>
    <property type="match status" value="1"/>
</dbReference>
<dbReference type="Gene3D" id="1.10.10.750">
    <property type="entry name" value="Ypt/Rab-GAP domain of gyp1p, domain 1"/>
    <property type="match status" value="1"/>
</dbReference>
<dbReference type="Gene3D" id="1.10.472.80">
    <property type="entry name" value="Ypt/Rab-GAP domain of gyp1p, domain 3"/>
    <property type="match status" value="1"/>
</dbReference>
<dbReference type="InterPro" id="IPR000195">
    <property type="entry name" value="Rab-GAP-TBC_dom"/>
</dbReference>
<dbReference type="InterPro" id="IPR035969">
    <property type="entry name" value="Rab-GAP_TBC_sf"/>
</dbReference>
<dbReference type="InterPro" id="IPR050302">
    <property type="entry name" value="Rab_GAP_TBC_domain"/>
</dbReference>
<dbReference type="PANTHER" id="PTHR47219">
    <property type="entry name" value="RAB GTPASE-ACTIVATING PROTEIN 1-LIKE"/>
    <property type="match status" value="1"/>
</dbReference>
<dbReference type="PANTHER" id="PTHR47219:SF21">
    <property type="entry name" value="TBC1 DOMAIN FAMILY MEMBER 14"/>
    <property type="match status" value="1"/>
</dbReference>
<dbReference type="Pfam" id="PF00566">
    <property type="entry name" value="RabGAP-TBC"/>
    <property type="match status" value="1"/>
</dbReference>
<dbReference type="SMART" id="SM00164">
    <property type="entry name" value="TBC"/>
    <property type="match status" value="1"/>
</dbReference>
<dbReference type="SUPFAM" id="SSF47923">
    <property type="entry name" value="Ypt/Rab-GAP domain of gyp1p"/>
    <property type="match status" value="2"/>
</dbReference>
<dbReference type="PROSITE" id="PS50086">
    <property type="entry name" value="TBC_RABGAP"/>
    <property type="match status" value="1"/>
</dbReference>
<gene>
    <name type="primary">Tbc1d14</name>
    <name type="ORF">UR-NR#2</name>
</gene>
<keyword id="KW-0333">Golgi apparatus</keyword>
<keyword id="KW-0343">GTPase activation</keyword>
<keyword id="KW-0597">Phosphoprotein</keyword>
<keyword id="KW-1185">Reference proteome</keyword>
<proteinExistence type="evidence at transcript level"/>
<evidence type="ECO:0000250" key="1">
    <source>
        <dbReference type="UniProtKB" id="Q9P2M4"/>
    </source>
</evidence>
<evidence type="ECO:0000255" key="2">
    <source>
        <dbReference type="PROSITE-ProRule" id="PRU00163"/>
    </source>
</evidence>
<evidence type="ECO:0000256" key="3">
    <source>
        <dbReference type="SAM" id="MobiDB-lite"/>
    </source>
</evidence>
<evidence type="ECO:0000269" key="4">
    <source>
    </source>
</evidence>
<evidence type="ECO:0000269" key="5">
    <source>
    </source>
</evidence>
<evidence type="ECO:0000305" key="6"/>
<protein>
    <recommendedName>
        <fullName>TBC1 domain family member 14</fullName>
    </recommendedName>
    <alternativeName>
        <fullName>Spermatogenesis-related factor 2</fullName>
        <shortName>SRF-2</shortName>
    </alternativeName>
    <alternativeName>
        <fullName>Up-regulated in nephrectomized rat kidney #2</fullName>
    </alternativeName>
</protein>
<comment type="function">
    <text evidence="1">Plays a role in the regulation of starvation-induced autophagosome formation. Together with the TRAPPIII complex, regulates a constitutive trafficking step from peripheral recycling endosomes to the early Golgi, maintaining the cycling pool of ATG9 required for initiation of autophagy.</text>
</comment>
<comment type="subunit">
    <text evidence="1">Interacts with ULK1. May interact with RAB11A and RAB11B, but does not exhibit any GTPase-activating activity toward these proteins. Interacts with TRAPPC8.</text>
</comment>
<comment type="subcellular location">
    <subcellularLocation>
        <location evidence="1">Golgi apparatus</location>
        <location evidence="1">cis-Golgi network</location>
    </subcellularLocation>
    <subcellularLocation>
        <location evidence="1">Golgi apparatus</location>
        <location evidence="1">trans-Golgi network</location>
    </subcellularLocation>
    <text evidence="1">After amino acid starvation, Golgi apparatus-associated protein levels increase compared with fed conditions. May be cycling between the Golgi apparatus and an endosomal pool, redistributing to the Golgi apparatus upon starvation.</text>
</comment>
<comment type="tissue specificity">
    <text evidence="4 5">PubMed:15758561 detected expression at the stage of sexual maturation in testis, mainly in the spermatocytes. No expression detected in the ovary, brain, heart, lung, liver and kidney. PubMed:15200410 detected expression in brain, heart, lung, liver, spleen and kidney but not in small intestine.</text>
</comment>
<comment type="developmental stage">
    <text evidence="5">First detected in the testis at 5 weeks. Level of expression increases up to 7 weeks and maintains even at 63 weeks.</text>
</comment>
<comment type="induction">
    <text evidence="4">Up-regulated in nephrectomized kidney.</text>
</comment>
<comment type="sequence caution" evidence="6">
    <conflict type="erroneous initiation">
        <sequence resource="EMBL-CDS" id="AAH99760"/>
    </conflict>
</comment>
<comment type="sequence caution" evidence="6">
    <conflict type="erroneous initiation">
        <sequence resource="EMBL-CDS" id="BAD23893"/>
    </conflict>
</comment>
<comment type="sequence caution" evidence="6">
    <conflict type="erroneous initiation">
        <sequence resource="EMBL-CDS" id="BAD91010"/>
    </conflict>
    <text>Extended N-terminus.</text>
</comment>
<comment type="sequence caution" evidence="6">
    <conflict type="frameshift">
        <sequence resource="EMBL-CDS" id="BAD91010"/>
    </conflict>
</comment>
<sequence>MTDGNLSTSMNGVALMGILDGRPGDSLQELQHLSIKAVPRSLSVPDYGPTLKLGALEDRHSLQSVDSGIPTLEIGNPEPVPCSVVHVKRKQSESEIIPERAFQSACPLPSCTPSAPTGSEREQAVRKSSTFPRTGYDSVKLYSPTSKALSRSDDVSVCSVSSLGTELSTTLSVSNEDILDLMVTSNSSAIVTLENDDDPQFTDVTLSSIKETSDLHQQDCVAETEEGRKLRLLQPFSHFFTRNLLARKQNARLDRQRDLGWKLFGKVPLRETAQKDSKKTQKEYEDKAGRPSRPPSPKQNVRKNLDFEPLSTTALILEDRPANLPAKPAEEAQKHRQQYEEMVVQAKKRELKEAQRRKKQLEERCKVEESIGNAVLTWNNEILPNWETMWCSKKVRDLWWQGIPPSVRGKVWSLAIGNELNITHELFDICLARAKERWRSLSTGGSEVENEDAGFSAADREASLELIKLDISRTFPNLCIFQQGGPYHDMLHSILGAYTCYRPDVGYVQGMSFIAAVLILNLDTADAFIAFSNLLNKPCQMAFFRVDHGLMLTYFAAFEVFFEENLPKLFAHFKKNNLTADIYLIDWIFTLYSKSLPLDLACRIWDVFCRDGEEFLFRTALGILKLFEDILTRMDFIHSAQFLTRLPEDLPADDVFAAISTVQMQSRNKKWAQVLSALQKDSREMEEGSPSVRD</sequence>
<reference key="1">
    <citation type="journal article" date="2005" name="Endocr. J.">
        <title>A novel spermatogenesis related factor-2 (SRF-2) gene expression affected by TCDD treatment.</title>
        <authorList>
            <person name="Yamano Y."/>
            <person name="Ohyama K."/>
            <person name="Ohta M."/>
            <person name="Sano T."/>
            <person name="Ritani A."/>
            <person name="Shimada J."/>
            <person name="Ashida N."/>
            <person name="Yoshida E."/>
            <person name="Ikehara K."/>
            <person name="Morishima I."/>
        </authorList>
    </citation>
    <scope>NUCLEOTIDE SEQUENCE [MRNA]</scope>
    <scope>TISSUE SPECIFICITY</scope>
    <scope>DEVELOPMENTAL STAGE</scope>
    <source>
        <strain>Sprague-Dawley</strain>
        <tissue>Testis</tissue>
    </source>
</reference>
<reference key="2">
    <citation type="journal article" date="2004" name="Genome Res.">
        <title>The status, quality, and expansion of the NIH full-length cDNA project: the Mammalian Gene Collection (MGC).</title>
        <authorList>
            <consortium name="The MGC Project Team"/>
        </authorList>
    </citation>
    <scope>NUCLEOTIDE SEQUENCE [LARGE SCALE MRNA]</scope>
    <source>
        <tissue>Prostate</tissue>
    </source>
</reference>
<reference key="3">
    <citation type="journal article" date="2004" name="Kidney Int.">
        <title>Gene expression variance based on random sequencing in rat remnant kidney.</title>
        <authorList>
            <person name="Horiba N."/>
            <person name="Masuda S."/>
            <person name="Takeuchi A."/>
            <person name="Saito H."/>
            <person name="Okuda M."/>
            <person name="Inui K."/>
        </authorList>
    </citation>
    <scope>NUCLEOTIDE SEQUENCE [MRNA] OF 278-694</scope>
    <scope>TISSUE SPECIFICITY</scope>
    <scope>INDUCTION</scope>
    <source>
        <strain>Wistar</strain>
        <tissue>Kidney</tissue>
    </source>
</reference>
<feature type="chain" id="PRO_0000319418" description="TBC1 domain family member 14">
    <location>
        <begin position="1"/>
        <end position="694"/>
    </location>
</feature>
<feature type="domain" description="Rab-GAP TBC" evidence="2">
    <location>
        <begin position="402"/>
        <end position="612"/>
    </location>
</feature>
<feature type="region of interest" description="Disordered" evidence="3">
    <location>
        <begin position="108"/>
        <end position="130"/>
    </location>
</feature>
<feature type="region of interest" description="Disordered" evidence="3">
    <location>
        <begin position="272"/>
        <end position="305"/>
    </location>
</feature>
<feature type="compositionally biased region" description="Basic and acidic residues" evidence="3">
    <location>
        <begin position="272"/>
        <end position="289"/>
    </location>
</feature>
<feature type="modified residue" description="Phosphoserine" evidence="1">
    <location>
        <position position="92"/>
    </location>
</feature>
<feature type="modified residue" description="Phosphoserine" evidence="1">
    <location>
        <position position="296"/>
    </location>
</feature>
<feature type="sequence conflict" description="In Ref. 3; BAD23893." evidence="6" ref="3">
    <original>KKTQK</original>
    <variation>GLASM</variation>
    <location>
        <begin position="278"/>
        <end position="282"/>
    </location>
</feature>
<feature type="sequence conflict" description="In Ref. 3; BAD23893." evidence="6" ref="3">
    <original>N</original>
    <variation>S</variation>
    <location>
        <position position="304"/>
    </location>
</feature>
<feature type="sequence conflict" description="In Ref. 3; BAD23893." evidence="6" ref="3">
    <original>I</original>
    <variation>M</variation>
    <location>
        <position position="416"/>
    </location>
</feature>
<feature type="sequence conflict" description="In Ref. 3; BAD23893." evidence="6" ref="3">
    <original>L</original>
    <variation>V</variation>
    <location>
        <position position="420"/>
    </location>
</feature>
<feature type="sequence conflict" description="In Ref. 3; BAD23893." evidence="6" ref="3">
    <original>L</original>
    <variation>F</variation>
    <location>
        <position position="431"/>
    </location>
</feature>
<organism>
    <name type="scientific">Rattus norvegicus</name>
    <name type="common">Rat</name>
    <dbReference type="NCBI Taxonomy" id="10116"/>
    <lineage>
        <taxon>Eukaryota</taxon>
        <taxon>Metazoa</taxon>
        <taxon>Chordata</taxon>
        <taxon>Craniata</taxon>
        <taxon>Vertebrata</taxon>
        <taxon>Euteleostomi</taxon>
        <taxon>Mammalia</taxon>
        <taxon>Eutheria</taxon>
        <taxon>Euarchontoglires</taxon>
        <taxon>Glires</taxon>
        <taxon>Rodentia</taxon>
        <taxon>Myomorpha</taxon>
        <taxon>Muroidea</taxon>
        <taxon>Muridae</taxon>
        <taxon>Murinae</taxon>
        <taxon>Rattus</taxon>
    </lineage>
</organism>
<accession>Q5CD77</accession>
<accession>Q499U3</accession>
<accession>Q6I7R4</accession>
<name>TBC14_RAT</name>